<accession>Q5MNH1</accession>
<name>LOLF2_EPIUN</name>
<gene>
    <name evidence="9" type="primary">lolF2</name>
    <name evidence="9" type="synonym">lolF</name>
</gene>
<comment type="function">
    <text evidence="2 3 4 5 6 7 8">FAD-binding monooxygenase; part of the gene cluster that mediates the biosynthesis of loline alkaloids, potent insecticidal agents composed of a pyrrolizidine ring system and an uncommon ether bridge linking carbons 2 and 7 (PubMed:15654104). Lolines are structurally differentiated by the various modifications of the L-amino group and include norloline, loline, N-methylloline, N-acetylloline, N-acetylnorloline, and N-formylloline (PubMed:15861432, PubMed:25531527). The first committed step is the condensation of O-acetyl-L-homoserine (derived from L-aspartic acid) and L-proline, probably catalyzed by the gamma-type pyridoxal 5'-phosphate(PLP)-dependent enzyme lolC, to give the diamino diacid, NACPP (PubMed:15861432, PubMed:16755627). Ensuing cyclization, decarboxylation, and acetylation steps yield 1-exo-acetamidopyrrolizidine (AcAP) (PubMed:24374065). LolO is required for installation of the ether bridge upon the pathway intermediate, 1-exo-acetamidopyrrolizidine (AcAP) (PubMed:29537853). In sequential 2-oxoglutarate- and O(2)-consuming steps, lolO removes hydrogens from C2 and C7 of AcAP to form both carbon-oxygen bonds in N-acetylnorloline (NANL), the precursor to all other lolines (PubMed:24374065, PubMed:29537853). The enzymes lolD, lolE, lolF and lolT have also been proposed to be involved in the ether-bridge installation (PubMed:15654104). Further processing of the exocyclic moiety of NANL by fungal N-acetamidase (LolN), methyltransferase (LolM), and cytochrome P450 (LolP) enzymes, with occasional involvement of a plant acetyltransferase, generates the other known lolines (PubMed:18655839, PubMed:25531527). LolN transforms NANL to norlonine which is monomethylated and dimethylated to respectively lonine and N-methyllonine (NML) by lolM (PubMed:25531527). LolP catalyzes hydroxylation of the methyl group in N-methylloline (NML) and further oxygenation to N-formylloline (NFL) (PubMed:18655839). A plant acetyltransferase is responsible for the acetylation of loline to form N-acetylloline (NAL) (PubMed:25531527). LolA might interact with aspartate kinase to prevent feedback inhibition of its activity by these end products and thereby promote production of l-homoserine from l-aspartate (PubMed:15654104).</text>
</comment>
<comment type="cofactor">
    <cofactor evidence="1">
        <name>FAD</name>
        <dbReference type="ChEBI" id="CHEBI:57692"/>
    </cofactor>
    <text evidence="1">Binds 1 FAD per subunit.</text>
</comment>
<comment type="pathway">
    <text evidence="11">Alkaloid biosynthesis.</text>
</comment>
<comment type="induction">
    <text evidence="2">Expression is induced in loline alkaloid-producing cultures as well as in planta (PubMed:15654104).</text>
</comment>
<comment type="biotechnology">
    <text evidence="12">Loline alkaloids show broad-spectrum anti-insect activity, and different lolines may have different biological activities (PubMed:25531527). In vitro tests of NFL, NAL, NML, and semisynthetic loline derivatives with long carbon-chain acylations on the 1-amine have shown that many are effective against both fall armyworm larvae and European corn borer larvae, but the effects seem to differ depending on the modifications (PubMed:25531527). N-Formylloline reduces the weight gain of fall armyworms by deterring feeding, and does not significantly affect corn borers (PubMed:25531527). In contrast, NAL reduces the weight gain of corn borer larvae without changing larval feeding behavior, indicating that its effect is due to metabolic toxicity. N-formylloline, NAL, and NML are almost as potent as nicotine in insecticidal activity against green bugs (PubMed:25531527).</text>
</comment>
<comment type="similarity">
    <text evidence="10">Belongs to the FAD-binding monooxygenase family.</text>
</comment>
<organism>
    <name type="scientific">Epichloe uncinata</name>
    <name type="common">Endophyte fungus</name>
    <name type="synonym">Neotyphodium uncinatum</name>
    <dbReference type="NCBI Taxonomy" id="5050"/>
    <lineage>
        <taxon>Eukaryota</taxon>
        <taxon>Fungi</taxon>
        <taxon>Dikarya</taxon>
        <taxon>Ascomycota</taxon>
        <taxon>Pezizomycotina</taxon>
        <taxon>Sordariomycetes</taxon>
        <taxon>Hypocreomycetidae</taxon>
        <taxon>Hypocreales</taxon>
        <taxon>Clavicipitaceae</taxon>
        <taxon>Epichloe</taxon>
    </lineage>
</organism>
<protein>
    <recommendedName>
        <fullName evidence="9">FAD-binding monooxygenase lolF2</fullName>
        <ecNumber evidence="11">1.14.13.-</ecNumber>
    </recommendedName>
    <alternativeName>
        <fullName evidence="9">Loline biosynthesis cluster 2 protein F</fullName>
    </alternativeName>
</protein>
<sequence length="540" mass="61573">MTLTNLDAIVVGAGFSGILAVYRLRKLGFRVQGFERQERLGGVWRENAYPGAAVDSLFPFYQFYDAELLQDWEWGEQFPTRAEMLRYFDHVDKRWEISASFEFGVSVSAARYSETTQRWTVTLEDGRRAEARWFIPAVGFSSVLNIPRIPGMSRFRGAIYHTAKWPHDAVSMRGKRVAVIGTGPSGVQIIQSVGKIAKAMTIFQQSPCLTLRKYGSPNQTATALCMRPDDHREALRLGLQTSNGFGYVPRDQDTLDVPIEERNHFYQQRYLAGGWAFWMAGFRDLCQNIQANRDAYDFWARRTRARIGDVTKRELLVPQIPSFAFGIKRPCLEEDLYEIMDQPHVKIIDISNQQIELITETSIRVHGQTVECEAIIFATGFGDEASGLRSLHIRGRNGIRLEDAWSDGVESHLGMAIHSFPNMFFLYGPQCPTLLVNSPAVITVQVEWLCEIISKCQQAGICQLEATSKSHCQWEKKMSLLWDKTLYHTHARKSKKTAEANKEEKTWVGGLILYRRELENCLANNLEGFQAWYVEETALL</sequence>
<reference key="1">
    <citation type="journal article" date="2005" name="Genetics">
        <title>Gene clusters for insecticidal loline alkaloids in the grass-endophytic fungus Neotyphodium uncinatum.</title>
        <authorList>
            <person name="Spiering M.J."/>
            <person name="Moon C.D."/>
            <person name="Wilkinson H.H."/>
            <person name="Schardl C.L."/>
        </authorList>
    </citation>
    <scope>NUCLEOTIDE SEQUENCE [GENOMIC DNA]</scope>
    <scope>INDUCTION</scope>
    <scope>FUNCTION</scope>
    <source>
        <strain>CBS 102646</strain>
    </source>
</reference>
<reference key="2">
    <citation type="journal article" date="2005" name="ChemBioChem">
        <title>Biosynthetic precursors of fungal pyrrolizidines, the loline alkaloids.</title>
        <authorList>
            <person name="Blankenship J.D."/>
            <person name="Houseknecht J.B."/>
            <person name="Pal S."/>
            <person name="Bush L.P."/>
            <person name="Grossman R.B."/>
            <person name="Schardl C.L."/>
        </authorList>
    </citation>
    <scope>FUNCTION</scope>
</reference>
<reference key="3">
    <citation type="journal article" date="2006" name="ChemBioChem">
        <title>On the sequence of bond formation in loline alkaloid biosynthesis.</title>
        <authorList>
            <person name="Faulkner J.R."/>
            <person name="Hussaini S.R."/>
            <person name="Blankenship J.D."/>
            <person name="Pal S."/>
            <person name="Branan B.M."/>
            <person name="Grossman R.B."/>
            <person name="Schardl C.L."/>
        </authorList>
    </citation>
    <scope>FUNCTION</scope>
</reference>
<reference key="4">
    <citation type="journal article" date="2008" name="Fungal Genet. Biol.">
        <title>Role of the LolP cytochrome P450 monooxygenase in loline alkaloid biosynthesis.</title>
        <authorList>
            <person name="Spiering M.J."/>
            <person name="Faulkner J.R."/>
            <person name="Zhang D.X."/>
            <person name="Machado C."/>
            <person name="Grossman R.B."/>
            <person name="Schardl C.L."/>
        </authorList>
    </citation>
    <scope>FUNCTION</scope>
    <source>
        <strain>CBS 102646</strain>
    </source>
</reference>
<reference key="5">
    <citation type="journal article" date="2014" name="Phytochemistry">
        <title>Ether bridge formation in loline alkaloid biosynthesis.</title>
        <authorList>
            <person name="Pan J."/>
            <person name="Bhardwaj M."/>
            <person name="Faulkner J.R."/>
            <person name="Nagabhyru P."/>
            <person name="Charlton N.D."/>
            <person name="Higashi R.M."/>
            <person name="Miller A.F."/>
            <person name="Young C.A."/>
            <person name="Grossman R.B."/>
            <person name="Schardl C.L."/>
        </authorList>
    </citation>
    <scope>FUNCTION</scope>
</reference>
<reference key="6">
    <citation type="journal article" date="2014" name="PLoS ONE">
        <title>Enzymes from fungal and plant origin required for chemical diversification of insecticidal loline alkaloids in grass-Epichloe symbiota.</title>
        <authorList>
            <person name="Pan J."/>
            <person name="Bhardwaj M."/>
            <person name="Nagabhyru P."/>
            <person name="Grossman R.B."/>
            <person name="Schardl C.L."/>
        </authorList>
    </citation>
    <scope>FUNCTION</scope>
    <scope>BIOTECHNOLOGY</scope>
</reference>
<reference key="7">
    <citation type="journal article" date="2018" name="Biochemistry">
        <title>Installation of the ether bridge of lolines by the iron- and 2-oxoglutarate-dependent oxygenase, lolO: regio- and stereochemistry of sequential hydroxylation and oxacyclization reactions.</title>
        <authorList>
            <person name="Pan J."/>
            <person name="Bhardwaj M."/>
            <person name="Zhang B."/>
            <person name="Chang W.C."/>
            <person name="Schardl C.L."/>
            <person name="Krebs C."/>
            <person name="Grossman R.B."/>
            <person name="Bollinger J.M. Jr."/>
        </authorList>
    </citation>
    <scope>FUNCTION</scope>
</reference>
<evidence type="ECO:0000250" key="1">
    <source>
        <dbReference type="UniProtKB" id="H3JQW0"/>
    </source>
</evidence>
<evidence type="ECO:0000269" key="2">
    <source>
    </source>
</evidence>
<evidence type="ECO:0000269" key="3">
    <source>
    </source>
</evidence>
<evidence type="ECO:0000269" key="4">
    <source>
    </source>
</evidence>
<evidence type="ECO:0000269" key="5">
    <source>
    </source>
</evidence>
<evidence type="ECO:0000269" key="6">
    <source>
    </source>
</evidence>
<evidence type="ECO:0000269" key="7">
    <source>
    </source>
</evidence>
<evidence type="ECO:0000269" key="8">
    <source>
    </source>
</evidence>
<evidence type="ECO:0000303" key="9">
    <source>
    </source>
</evidence>
<evidence type="ECO:0000305" key="10"/>
<evidence type="ECO:0000305" key="11">
    <source>
    </source>
</evidence>
<evidence type="ECO:0000305" key="12">
    <source>
    </source>
</evidence>
<proteinExistence type="evidence at transcript level"/>
<keyword id="KW-0017">Alkaloid metabolism</keyword>
<keyword id="KW-0274">FAD</keyword>
<keyword id="KW-0285">Flavoprotein</keyword>
<keyword id="KW-0503">Monooxygenase</keyword>
<keyword id="KW-0521">NADP</keyword>
<keyword id="KW-0560">Oxidoreductase</keyword>
<feature type="chain" id="PRO_0000444360" description="FAD-binding monooxygenase lolF2">
    <location>
        <begin position="1"/>
        <end position="540"/>
    </location>
</feature>
<feature type="binding site" evidence="1">
    <location>
        <begin position="43"/>
        <end position="46"/>
    </location>
    <ligand>
        <name>FAD</name>
        <dbReference type="ChEBI" id="CHEBI:57692"/>
    </ligand>
</feature>
<feature type="binding site" evidence="1">
    <location>
        <begin position="53"/>
        <end position="55"/>
    </location>
    <ligand>
        <name>NADP(+)</name>
        <dbReference type="ChEBI" id="CHEBI:58349"/>
    </ligand>
</feature>
<feature type="binding site" evidence="1">
    <location>
        <begin position="55"/>
        <end position="58"/>
    </location>
    <ligand>
        <name>FAD</name>
        <dbReference type="ChEBI" id="CHEBI:57692"/>
    </ligand>
</feature>
<feature type="binding site" evidence="1">
    <location>
        <begin position="182"/>
        <end position="188"/>
    </location>
    <ligand>
        <name>NADP(+)</name>
        <dbReference type="ChEBI" id="CHEBI:58349"/>
    </ligand>
</feature>
<feature type="binding site" evidence="1">
    <location>
        <begin position="205"/>
        <end position="206"/>
    </location>
    <ligand>
        <name>NADP(+)</name>
        <dbReference type="ChEBI" id="CHEBI:58349"/>
    </ligand>
</feature>
<feature type="site" description="Transition state stabilizer" evidence="1">
    <location>
        <position position="329"/>
    </location>
</feature>
<dbReference type="EC" id="1.14.13.-" evidence="11"/>
<dbReference type="EMBL" id="AY724686">
    <property type="protein sequence ID" value="AAV68694.1"/>
    <property type="molecule type" value="Genomic_DNA"/>
</dbReference>
<dbReference type="SMR" id="Q5MNH1"/>
<dbReference type="GO" id="GO:0050660">
    <property type="term" value="F:flavin adenine dinucleotide binding"/>
    <property type="evidence" value="ECO:0007669"/>
    <property type="project" value="InterPro"/>
</dbReference>
<dbReference type="GO" id="GO:0004499">
    <property type="term" value="F:N,N-dimethylaniline monooxygenase activity"/>
    <property type="evidence" value="ECO:0007669"/>
    <property type="project" value="InterPro"/>
</dbReference>
<dbReference type="GO" id="GO:0050661">
    <property type="term" value="F:NADP binding"/>
    <property type="evidence" value="ECO:0007669"/>
    <property type="project" value="InterPro"/>
</dbReference>
<dbReference type="GO" id="GO:0009820">
    <property type="term" value="P:alkaloid metabolic process"/>
    <property type="evidence" value="ECO:0007669"/>
    <property type="project" value="UniProtKB-KW"/>
</dbReference>
<dbReference type="Gene3D" id="3.50.50.60">
    <property type="entry name" value="FAD/NAD(P)-binding domain"/>
    <property type="match status" value="2"/>
</dbReference>
<dbReference type="InterPro" id="IPR050775">
    <property type="entry name" value="FAD-binding_Monooxygenases"/>
</dbReference>
<dbReference type="InterPro" id="IPR036188">
    <property type="entry name" value="FAD/NAD-bd_sf"/>
</dbReference>
<dbReference type="InterPro" id="IPR020946">
    <property type="entry name" value="Flavin_mOase-like"/>
</dbReference>
<dbReference type="PANTHER" id="PTHR43098">
    <property type="entry name" value="L-ORNITHINE N(5)-MONOOXYGENASE-RELATED"/>
    <property type="match status" value="1"/>
</dbReference>
<dbReference type="PANTHER" id="PTHR43098:SF3">
    <property type="entry name" value="L-ORNITHINE N(5)-MONOOXYGENASE-RELATED"/>
    <property type="match status" value="1"/>
</dbReference>
<dbReference type="Pfam" id="PF00743">
    <property type="entry name" value="FMO-like"/>
    <property type="match status" value="1"/>
</dbReference>
<dbReference type="PRINTS" id="PR00411">
    <property type="entry name" value="PNDRDTASEI"/>
</dbReference>
<dbReference type="SUPFAM" id="SSF51905">
    <property type="entry name" value="FAD/NAD(P)-binding domain"/>
    <property type="match status" value="2"/>
</dbReference>